<sequence length="561" mass="61311">MITAALHEPQIHKPTDTSVVSDDVLPHSPPTPRIFRSKLPDIDIPNHLPLHTYCFEKLSSVSDKPCLIVGSTGKSYTYGETHLICRRVASGLYKLGIRKGDVIMILLQNSAEFVFSFMGASMIGAVSTTANPFYTSQELYKQLKSSGAKLIITHSQYVDKLKNLGENLTLITTDEPTPENCLPFSTLITDDETNPFQETVDIGGDDAAALPFSSGTTGLPKGVVLTHKSLITSVAQQVDGDNPNLYLKSNDVILCVLPLFHIYSLNSVLLNSLRSGATVLLMHKFEIGALLDLIQRHRVTIAALVPPLVIALAKNPTVNSYDLSSVRFVLSGAAPLGKELQDSLRRRLPQAILGQGYGMTEAGPVLSMSLGFAKEPIPTKSGSCGTVVRNAELKVVHLETRLSLGYNQPGEICIRGQQIMKEYLNDPEATSATIDEEGWLHTGDIGYVDEDDEIFIVDRLKEVIKFKGFQVPPAELESLLINHHSIADAAVVPQNDEVAGEVPVAFVVRSNGNDITEEDVKEYVAKQVVFYKRLHKVFFVASIPKSPSGKILRKDLKAKLC</sequence>
<accession>Q9S777</accession>
<accession>Q93Z69</accession>
<dbReference type="EC" id="6.2.1.12" evidence="3"/>
<dbReference type="EC" id="6.2.1.34" evidence="3"/>
<dbReference type="EMBL" id="AF106087">
    <property type="protein sequence ID" value="AAD47194.1"/>
    <property type="molecule type" value="Genomic_DNA"/>
</dbReference>
<dbReference type="EMBL" id="AF106088">
    <property type="protein sequence ID" value="AAD47195.1"/>
    <property type="molecule type" value="mRNA"/>
</dbReference>
<dbReference type="EMBL" id="AY376730">
    <property type="protein sequence ID" value="AAQ86589.1"/>
    <property type="molecule type" value="mRNA"/>
</dbReference>
<dbReference type="EMBL" id="AC009360">
    <property type="protein sequence ID" value="AAF06039.1"/>
    <property type="molecule type" value="Genomic_DNA"/>
</dbReference>
<dbReference type="EMBL" id="CP002684">
    <property type="protein sequence ID" value="AEE34323.1"/>
    <property type="molecule type" value="Genomic_DNA"/>
</dbReference>
<dbReference type="EMBL" id="AY058083">
    <property type="protein sequence ID" value="AAL24191.1"/>
    <property type="status" value="ALT_INIT"/>
    <property type="molecule type" value="mRNA"/>
</dbReference>
<dbReference type="EMBL" id="AY090306">
    <property type="protein sequence ID" value="AAL90967.1"/>
    <property type="molecule type" value="mRNA"/>
</dbReference>
<dbReference type="PIR" id="D96674">
    <property type="entry name" value="D96674"/>
</dbReference>
<dbReference type="RefSeq" id="NP_176686.1">
    <molecule id="Q9S777-1"/>
    <property type="nucleotide sequence ID" value="NM_105180.4"/>
</dbReference>
<dbReference type="SMR" id="Q9S777"/>
<dbReference type="FunCoup" id="Q9S777">
    <property type="interactions" value="1652"/>
</dbReference>
<dbReference type="STRING" id="3702.Q9S777"/>
<dbReference type="GlyGen" id="Q9S777">
    <property type="glycosylation" value="1 site"/>
</dbReference>
<dbReference type="iPTMnet" id="Q9S777"/>
<dbReference type="PaxDb" id="3702-AT1G65060.1"/>
<dbReference type="ProteomicsDB" id="244548">
    <molecule id="Q9S777-1"/>
</dbReference>
<dbReference type="EnsemblPlants" id="AT1G65060.1">
    <molecule id="Q9S777-1"/>
    <property type="protein sequence ID" value="AT1G65060.1"/>
    <property type="gene ID" value="AT1G65060"/>
</dbReference>
<dbReference type="GeneID" id="842814"/>
<dbReference type="Gramene" id="AT1G65060.1">
    <molecule id="Q9S777-1"/>
    <property type="protein sequence ID" value="AT1G65060.1"/>
    <property type="gene ID" value="AT1G65060"/>
</dbReference>
<dbReference type="KEGG" id="ath:AT1G65060"/>
<dbReference type="Araport" id="AT1G65060"/>
<dbReference type="TAIR" id="AT1G65060">
    <property type="gene designation" value="4CL3"/>
</dbReference>
<dbReference type="eggNOG" id="KOG1176">
    <property type="taxonomic scope" value="Eukaryota"/>
</dbReference>
<dbReference type="HOGENOM" id="CLU_000022_59_2_1"/>
<dbReference type="InParanoid" id="Q9S777"/>
<dbReference type="OMA" id="PNSSFWY"/>
<dbReference type="PhylomeDB" id="Q9S777"/>
<dbReference type="BioCyc" id="ARA:AT1G65060-MONOMER"/>
<dbReference type="BioCyc" id="MetaCyc:AT1G65060-MONOMER"/>
<dbReference type="BRENDA" id="6.2.1.12">
    <property type="organism ID" value="399"/>
</dbReference>
<dbReference type="SABIO-RK" id="Q9S777"/>
<dbReference type="UniPathway" id="UPA00372">
    <property type="reaction ID" value="UER00547"/>
</dbReference>
<dbReference type="PRO" id="PR:Q9S777"/>
<dbReference type="Proteomes" id="UP000006548">
    <property type="component" value="Chromosome 1"/>
</dbReference>
<dbReference type="ExpressionAtlas" id="Q9S777">
    <property type="expression patterns" value="baseline and differential"/>
</dbReference>
<dbReference type="GO" id="GO:0106286">
    <property type="term" value="F:(E)-caffeate-CoA ligase activity"/>
    <property type="evidence" value="ECO:0007669"/>
    <property type="project" value="RHEA"/>
</dbReference>
<dbReference type="GO" id="GO:0016207">
    <property type="term" value="F:4-coumarate-CoA ligase activity"/>
    <property type="evidence" value="ECO:0000314"/>
    <property type="project" value="TAIR"/>
</dbReference>
<dbReference type="GO" id="GO:0005524">
    <property type="term" value="F:ATP binding"/>
    <property type="evidence" value="ECO:0007669"/>
    <property type="project" value="UniProtKB-KW"/>
</dbReference>
<dbReference type="GO" id="GO:0050563">
    <property type="term" value="F:trans-feruloyl-CoA synthase activity"/>
    <property type="evidence" value="ECO:0007669"/>
    <property type="project" value="RHEA"/>
</dbReference>
<dbReference type="GO" id="GO:0009698">
    <property type="term" value="P:phenylpropanoid metabolic process"/>
    <property type="evidence" value="ECO:0000304"/>
    <property type="project" value="TAIR"/>
</dbReference>
<dbReference type="GO" id="GO:0010584">
    <property type="term" value="P:pollen exine formation"/>
    <property type="evidence" value="ECO:0000315"/>
    <property type="project" value="TAIR"/>
</dbReference>
<dbReference type="CDD" id="cd05904">
    <property type="entry name" value="4CL"/>
    <property type="match status" value="1"/>
</dbReference>
<dbReference type="FunFam" id="3.30.300.30:FF:000007">
    <property type="entry name" value="4-coumarate--CoA ligase 2"/>
    <property type="match status" value="1"/>
</dbReference>
<dbReference type="FunFam" id="3.40.50.12780:FF:000003">
    <property type="entry name" value="Long-chain-fatty-acid--CoA ligase FadD"/>
    <property type="match status" value="1"/>
</dbReference>
<dbReference type="Gene3D" id="3.30.300.30">
    <property type="match status" value="1"/>
</dbReference>
<dbReference type="Gene3D" id="3.40.50.12780">
    <property type="entry name" value="N-terminal domain of ligase-like"/>
    <property type="match status" value="1"/>
</dbReference>
<dbReference type="InterPro" id="IPR025110">
    <property type="entry name" value="AMP-bd_C"/>
</dbReference>
<dbReference type="InterPro" id="IPR045851">
    <property type="entry name" value="AMP-bd_C_sf"/>
</dbReference>
<dbReference type="InterPro" id="IPR020845">
    <property type="entry name" value="AMP-binding_CS"/>
</dbReference>
<dbReference type="InterPro" id="IPR000873">
    <property type="entry name" value="AMP-dep_synth/lig_dom"/>
</dbReference>
<dbReference type="InterPro" id="IPR042099">
    <property type="entry name" value="ANL_N_sf"/>
</dbReference>
<dbReference type="PANTHER" id="PTHR24096:SF169">
    <property type="entry name" value="4-COUMARATE--COA LIGASE 3"/>
    <property type="match status" value="1"/>
</dbReference>
<dbReference type="PANTHER" id="PTHR24096">
    <property type="entry name" value="LONG-CHAIN-FATTY-ACID--COA LIGASE"/>
    <property type="match status" value="1"/>
</dbReference>
<dbReference type="Pfam" id="PF00501">
    <property type="entry name" value="AMP-binding"/>
    <property type="match status" value="1"/>
</dbReference>
<dbReference type="Pfam" id="PF13193">
    <property type="entry name" value="AMP-binding_C"/>
    <property type="match status" value="1"/>
</dbReference>
<dbReference type="SUPFAM" id="SSF56801">
    <property type="entry name" value="Acetyl-CoA synthetase-like"/>
    <property type="match status" value="1"/>
</dbReference>
<dbReference type="PROSITE" id="PS00455">
    <property type="entry name" value="AMP_BINDING"/>
    <property type="match status" value="1"/>
</dbReference>
<name>4CL3_ARATH</name>
<evidence type="ECO:0000250" key="1">
    <source>
        <dbReference type="UniProtKB" id="O24146"/>
    </source>
</evidence>
<evidence type="ECO:0000250" key="2">
    <source>
        <dbReference type="UniProtKB" id="Q42524"/>
    </source>
</evidence>
<evidence type="ECO:0000269" key="3">
    <source>
    </source>
</evidence>
<evidence type="ECO:0000303" key="4">
    <source>
    </source>
</evidence>
<evidence type="ECO:0000305" key="5"/>
<evidence type="ECO:0000305" key="6">
    <source>
    </source>
</evidence>
<evidence type="ECO:0000312" key="7">
    <source>
        <dbReference type="Araport" id="AT1G65060"/>
    </source>
</evidence>
<evidence type="ECO:0000312" key="8">
    <source>
        <dbReference type="EMBL" id="AAF06039.1"/>
    </source>
</evidence>
<gene>
    <name evidence="4" type="primary">4CL3</name>
    <name evidence="7" type="ordered locus">At1g65060</name>
    <name evidence="8" type="ORF">F16G16.6</name>
</gene>
<organism>
    <name type="scientific">Arabidopsis thaliana</name>
    <name type="common">Mouse-ear cress</name>
    <dbReference type="NCBI Taxonomy" id="3702"/>
    <lineage>
        <taxon>Eukaryota</taxon>
        <taxon>Viridiplantae</taxon>
        <taxon>Streptophyta</taxon>
        <taxon>Embryophyta</taxon>
        <taxon>Tracheophyta</taxon>
        <taxon>Spermatophyta</taxon>
        <taxon>Magnoliopsida</taxon>
        <taxon>eudicotyledons</taxon>
        <taxon>Gunneridae</taxon>
        <taxon>Pentapetalae</taxon>
        <taxon>rosids</taxon>
        <taxon>malvids</taxon>
        <taxon>Brassicales</taxon>
        <taxon>Brassicaceae</taxon>
        <taxon>Camelineae</taxon>
        <taxon>Arabidopsis</taxon>
    </lineage>
</organism>
<reference key="1">
    <citation type="journal article" date="1999" name="Plant J.">
        <title>Three 4-coumarate:coenzyme A ligases in Arabidopsis thaliana represent two evolutionarily divergent classes in angiosperms.</title>
        <authorList>
            <person name="Ehlting J."/>
            <person name="Buettner D."/>
            <person name="Wang Q."/>
            <person name="Douglas C.J."/>
            <person name="Somssich I.E."/>
            <person name="Kombrink E."/>
        </authorList>
    </citation>
    <scope>NUCLEOTIDE SEQUENCE [GENOMIC DNA / MRNA]</scope>
    <scope>FUNCTION</scope>
    <scope>TISSUE SPECIFICITY</scope>
    <scope>INDUCTION</scope>
    <scope>CATALYTIC ACTIVITY</scope>
    <scope>BIOPHYSICOCHEMICAL PROPERTIES</scope>
    <scope>PATHWAY</scope>
    <source>
        <strain>cv. Columbia</strain>
    </source>
</reference>
<reference key="2">
    <citation type="submission" date="2003-08" db="EMBL/GenBank/DDBJ databases">
        <title>Functional classification of Arabidopsis thaliana 4-coumarate CoA ligase genes.</title>
        <authorList>
            <person name="Lawrence P.K."/>
        </authorList>
    </citation>
    <scope>NUCLEOTIDE SEQUENCE [MRNA]</scope>
</reference>
<reference key="3">
    <citation type="journal article" date="2000" name="Nature">
        <title>Sequence and analysis of chromosome 1 of the plant Arabidopsis thaliana.</title>
        <authorList>
            <person name="Theologis A."/>
            <person name="Ecker J.R."/>
            <person name="Palm C.J."/>
            <person name="Federspiel N.A."/>
            <person name="Kaul S."/>
            <person name="White O."/>
            <person name="Alonso J."/>
            <person name="Altafi H."/>
            <person name="Araujo R."/>
            <person name="Bowman C.L."/>
            <person name="Brooks S.Y."/>
            <person name="Buehler E."/>
            <person name="Chan A."/>
            <person name="Chao Q."/>
            <person name="Chen H."/>
            <person name="Cheuk R.F."/>
            <person name="Chin C.W."/>
            <person name="Chung M.K."/>
            <person name="Conn L."/>
            <person name="Conway A.B."/>
            <person name="Conway A.R."/>
            <person name="Creasy T.H."/>
            <person name="Dewar K."/>
            <person name="Dunn P."/>
            <person name="Etgu P."/>
            <person name="Feldblyum T.V."/>
            <person name="Feng J.-D."/>
            <person name="Fong B."/>
            <person name="Fujii C.Y."/>
            <person name="Gill J.E."/>
            <person name="Goldsmith A.D."/>
            <person name="Haas B."/>
            <person name="Hansen N.F."/>
            <person name="Hughes B."/>
            <person name="Huizar L."/>
            <person name="Hunter J.L."/>
            <person name="Jenkins J."/>
            <person name="Johnson-Hopson C."/>
            <person name="Khan S."/>
            <person name="Khaykin E."/>
            <person name="Kim C.J."/>
            <person name="Koo H.L."/>
            <person name="Kremenetskaia I."/>
            <person name="Kurtz D.B."/>
            <person name="Kwan A."/>
            <person name="Lam B."/>
            <person name="Langin-Hooper S."/>
            <person name="Lee A."/>
            <person name="Lee J.M."/>
            <person name="Lenz C.A."/>
            <person name="Li J.H."/>
            <person name="Li Y.-P."/>
            <person name="Lin X."/>
            <person name="Liu S.X."/>
            <person name="Liu Z.A."/>
            <person name="Luros J.S."/>
            <person name="Maiti R."/>
            <person name="Marziali A."/>
            <person name="Militscher J."/>
            <person name="Miranda M."/>
            <person name="Nguyen M."/>
            <person name="Nierman W.C."/>
            <person name="Osborne B.I."/>
            <person name="Pai G."/>
            <person name="Peterson J."/>
            <person name="Pham P.K."/>
            <person name="Rizzo M."/>
            <person name="Rooney T."/>
            <person name="Rowley D."/>
            <person name="Sakano H."/>
            <person name="Salzberg S.L."/>
            <person name="Schwartz J.R."/>
            <person name="Shinn P."/>
            <person name="Southwick A.M."/>
            <person name="Sun H."/>
            <person name="Tallon L.J."/>
            <person name="Tambunga G."/>
            <person name="Toriumi M.J."/>
            <person name="Town C.D."/>
            <person name="Utterback T."/>
            <person name="Van Aken S."/>
            <person name="Vaysberg M."/>
            <person name="Vysotskaia V.S."/>
            <person name="Walker M."/>
            <person name="Wu D."/>
            <person name="Yu G."/>
            <person name="Fraser C.M."/>
            <person name="Venter J.C."/>
            <person name="Davis R.W."/>
        </authorList>
    </citation>
    <scope>NUCLEOTIDE SEQUENCE [LARGE SCALE GENOMIC DNA]</scope>
    <source>
        <strain>cv. Columbia</strain>
    </source>
</reference>
<reference key="4">
    <citation type="journal article" date="2017" name="Plant J.">
        <title>Araport11: a complete reannotation of the Arabidopsis thaliana reference genome.</title>
        <authorList>
            <person name="Cheng C.Y."/>
            <person name="Krishnakumar V."/>
            <person name="Chan A.P."/>
            <person name="Thibaud-Nissen F."/>
            <person name="Schobel S."/>
            <person name="Town C.D."/>
        </authorList>
    </citation>
    <scope>GENOME REANNOTATION</scope>
    <source>
        <strain>cv. Columbia</strain>
    </source>
</reference>
<reference key="5">
    <citation type="journal article" date="2003" name="Science">
        <title>Empirical analysis of transcriptional activity in the Arabidopsis genome.</title>
        <authorList>
            <person name="Yamada K."/>
            <person name="Lim J."/>
            <person name="Dale J.M."/>
            <person name="Chen H."/>
            <person name="Shinn P."/>
            <person name="Palm C.J."/>
            <person name="Southwick A.M."/>
            <person name="Wu H.C."/>
            <person name="Kim C.J."/>
            <person name="Nguyen M."/>
            <person name="Pham P.K."/>
            <person name="Cheuk R.F."/>
            <person name="Karlin-Newmann G."/>
            <person name="Liu S.X."/>
            <person name="Lam B."/>
            <person name="Sakano H."/>
            <person name="Wu T."/>
            <person name="Yu G."/>
            <person name="Miranda M."/>
            <person name="Quach H.L."/>
            <person name="Tripp M."/>
            <person name="Chang C.H."/>
            <person name="Lee J.M."/>
            <person name="Toriumi M.J."/>
            <person name="Chan M.M."/>
            <person name="Tang C.C."/>
            <person name="Onodera C.S."/>
            <person name="Deng J.M."/>
            <person name="Akiyama K."/>
            <person name="Ansari Y."/>
            <person name="Arakawa T."/>
            <person name="Banh J."/>
            <person name="Banno F."/>
            <person name="Bowser L."/>
            <person name="Brooks S.Y."/>
            <person name="Carninci P."/>
            <person name="Chao Q."/>
            <person name="Choy N."/>
            <person name="Enju A."/>
            <person name="Goldsmith A.D."/>
            <person name="Gurjal M."/>
            <person name="Hansen N.F."/>
            <person name="Hayashizaki Y."/>
            <person name="Johnson-Hopson C."/>
            <person name="Hsuan V.W."/>
            <person name="Iida K."/>
            <person name="Karnes M."/>
            <person name="Khan S."/>
            <person name="Koesema E."/>
            <person name="Ishida J."/>
            <person name="Jiang P.X."/>
            <person name="Jones T."/>
            <person name="Kawai J."/>
            <person name="Kamiya A."/>
            <person name="Meyers C."/>
            <person name="Nakajima M."/>
            <person name="Narusaka M."/>
            <person name="Seki M."/>
            <person name="Sakurai T."/>
            <person name="Satou M."/>
            <person name="Tamse R."/>
            <person name="Vaysberg M."/>
            <person name="Wallender E.K."/>
            <person name="Wong C."/>
            <person name="Yamamura Y."/>
            <person name="Yuan S."/>
            <person name="Shinozaki K."/>
            <person name="Davis R.W."/>
            <person name="Theologis A."/>
            <person name="Ecker J.R."/>
        </authorList>
    </citation>
    <scope>NUCLEOTIDE SEQUENCE [LARGE SCALE MRNA] OF 284-561</scope>
    <source>
        <strain>cv. Columbia</strain>
    </source>
</reference>
<reference key="6">
    <citation type="journal article" date="2003" name="Plant Physiol.">
        <title>Arabidopsis contains a large superfamily of acyl-activating enzymes. Phylogenetic and biochemical analysis reveals a new class of acyl-coenzyme a synthetases.</title>
        <authorList>
            <person name="Shockey J.M."/>
            <person name="Fulda M.S."/>
            <person name="Browse J."/>
        </authorList>
    </citation>
    <scope>GENE FAMILY ORGANIZATION</scope>
</reference>
<reference key="7">
    <citation type="journal article" date="2003" name="Proc. Natl. Acad. Sci. U.S.A.">
        <title>The substrate specificity-determining amino acid code of 4-coumarate:CoA ligase.</title>
        <authorList>
            <person name="Schneider K."/>
            <person name="Hoevel K."/>
            <person name="Witzel K."/>
            <person name="Hamberger B."/>
            <person name="Schomburg D."/>
            <person name="Kombrink E."/>
            <person name="Stuible H.-P."/>
        </authorList>
    </citation>
    <scope>GENE FAMILY ORGANIZATION</scope>
</reference>
<reference key="8">
    <citation type="journal article" date="2013" name="Plant Physiol. Biochem.">
        <title>The flavonoid biosynthetic pathway in Arabidopsis: Structural and genetic diversity.</title>
        <authorList>
            <person name="Saito K."/>
            <person name="Yonekura-Sakakibara K."/>
            <person name="Nakabayashi R."/>
            <person name="Higashi Y."/>
            <person name="Yamazaki M."/>
            <person name="Tohge T."/>
            <person name="Fernie A.R."/>
        </authorList>
    </citation>
    <scope>REVIEW</scope>
    <scope>NOMENCLATURE</scope>
</reference>
<keyword id="KW-0025">Alternative splicing</keyword>
<keyword id="KW-0067">ATP-binding</keyword>
<keyword id="KW-0436">Ligase</keyword>
<keyword id="KW-0460">Magnesium</keyword>
<keyword id="KW-0547">Nucleotide-binding</keyword>
<keyword id="KW-0587">Phenylpropanoid metabolism</keyword>
<keyword id="KW-1185">Reference proteome</keyword>
<feature type="chain" id="PRO_0000193029" description="4-coumarate--CoA ligase 3">
    <location>
        <begin position="1"/>
        <end position="561"/>
    </location>
</feature>
<feature type="region of interest" description="SBD1" evidence="2">
    <location>
        <begin position="286"/>
        <end position="355"/>
    </location>
</feature>
<feature type="region of interest" description="SBD2" evidence="2">
    <location>
        <begin position="356"/>
        <end position="423"/>
    </location>
</feature>
<feature type="binding site" evidence="1">
    <location>
        <position position="213"/>
    </location>
    <ligand>
        <name>ATP</name>
        <dbReference type="ChEBI" id="CHEBI:30616"/>
    </ligand>
</feature>
<feature type="binding site" evidence="1">
    <location>
        <position position="214"/>
    </location>
    <ligand>
        <name>ATP</name>
        <dbReference type="ChEBI" id="CHEBI:30616"/>
    </ligand>
</feature>
<feature type="binding site" evidence="1">
    <location>
        <position position="215"/>
    </location>
    <ligand>
        <name>ATP</name>
        <dbReference type="ChEBI" id="CHEBI:30616"/>
    </ligand>
</feature>
<feature type="binding site" evidence="1">
    <location>
        <position position="216"/>
    </location>
    <ligand>
        <name>ATP</name>
        <dbReference type="ChEBI" id="CHEBI:30616"/>
    </ligand>
</feature>
<feature type="binding site" evidence="1">
    <location>
        <position position="217"/>
    </location>
    <ligand>
        <name>ATP</name>
        <dbReference type="ChEBI" id="CHEBI:30616"/>
    </ligand>
</feature>
<feature type="binding site" evidence="1">
    <location>
        <position position="221"/>
    </location>
    <ligand>
        <name>ATP</name>
        <dbReference type="ChEBI" id="CHEBI:30616"/>
    </ligand>
</feature>
<feature type="binding site" evidence="1">
    <location>
        <position position="263"/>
    </location>
    <ligand>
        <name>(E)-4-coumaroyl-AMP</name>
        <dbReference type="ChEBI" id="CHEBI:192348"/>
    </ligand>
</feature>
<feature type="binding site" evidence="1">
    <location>
        <position position="267"/>
    </location>
    <ligand>
        <name>(E)-4-coumaroyl-AMP</name>
        <dbReference type="ChEBI" id="CHEBI:192348"/>
    </ligand>
</feature>
<feature type="binding site" evidence="1">
    <location>
        <position position="284"/>
    </location>
    <ligand>
        <name>CoA</name>
        <dbReference type="ChEBI" id="CHEBI:57287"/>
    </ligand>
</feature>
<feature type="binding site" evidence="1">
    <location>
        <position position="333"/>
    </location>
    <ligand>
        <name>(E)-4-coumaroyl-AMP</name>
        <dbReference type="ChEBI" id="CHEBI:192348"/>
    </ligand>
</feature>
<feature type="binding site" evidence="1">
    <location>
        <position position="355"/>
    </location>
    <ligand>
        <name>(E)-4-coumaroyl-AMP</name>
        <dbReference type="ChEBI" id="CHEBI:192348"/>
    </ligand>
</feature>
<feature type="binding site" evidence="1">
    <location>
        <position position="355"/>
    </location>
    <ligand>
        <name>ATP</name>
        <dbReference type="ChEBI" id="CHEBI:30616"/>
    </ligand>
</feature>
<feature type="binding site" evidence="1">
    <location>
        <position position="356"/>
    </location>
    <ligand>
        <name>(E)-4-coumaroyl-AMP</name>
        <dbReference type="ChEBI" id="CHEBI:192348"/>
    </ligand>
</feature>
<feature type="binding site" evidence="1">
    <location>
        <position position="356"/>
    </location>
    <ligand>
        <name>ATP</name>
        <dbReference type="ChEBI" id="CHEBI:30616"/>
    </ligand>
</feature>
<feature type="binding site" evidence="1">
    <location>
        <position position="360"/>
    </location>
    <ligand>
        <name>(E)-4-coumaroyl-AMP</name>
        <dbReference type="ChEBI" id="CHEBI:192348"/>
    </ligand>
</feature>
<feature type="binding site" evidence="1">
    <location>
        <position position="360"/>
    </location>
    <ligand>
        <name>ATP</name>
        <dbReference type="ChEBI" id="CHEBI:30616"/>
    </ligand>
</feature>
<feature type="binding site" evidence="1">
    <location>
        <position position="368"/>
    </location>
    <ligand>
        <name>(E)-4-coumaroyl-AMP</name>
        <dbReference type="ChEBI" id="CHEBI:192348"/>
    </ligand>
</feature>
<feature type="binding site" evidence="1">
    <location>
        <position position="444"/>
    </location>
    <ligand>
        <name>ATP</name>
        <dbReference type="ChEBI" id="CHEBI:30616"/>
    </ligand>
</feature>
<feature type="binding site" evidence="1">
    <location>
        <position position="459"/>
    </location>
    <ligand>
        <name>ATP</name>
        <dbReference type="ChEBI" id="CHEBI:30616"/>
    </ligand>
</feature>
<feature type="binding site" evidence="1">
    <location>
        <position position="461"/>
    </location>
    <ligand>
        <name>(E)-4-coumaroyl-AMP</name>
        <dbReference type="ChEBI" id="CHEBI:192348"/>
    </ligand>
</feature>
<feature type="binding site" evidence="1">
    <location>
        <position position="465"/>
    </location>
    <ligand>
        <name>(E)-4-coumaroyl-AMP</name>
        <dbReference type="ChEBI" id="CHEBI:192348"/>
    </ligand>
</feature>
<feature type="binding site" evidence="1">
    <location>
        <position position="467"/>
    </location>
    <ligand>
        <name>CoA</name>
        <dbReference type="ChEBI" id="CHEBI:57287"/>
    </ligand>
</feature>
<feature type="binding site" evidence="1">
    <location>
        <position position="468"/>
    </location>
    <ligand>
        <name>CoA</name>
        <dbReference type="ChEBI" id="CHEBI:57287"/>
    </ligand>
</feature>
<feature type="binding site" evidence="1">
    <location>
        <position position="550"/>
    </location>
    <ligand>
        <name>ATP</name>
        <dbReference type="ChEBI" id="CHEBI:30616"/>
    </ligand>
</feature>
<comment type="function">
    <text evidence="1 3">Produces CoA thioesters of a variety of hydroxy- and methoxy-substituted cinnamic acids, which are used to synthesize several phenylpropanoid-derived compounds, including anthocyanins, flavonoids, isoflavonoids, coumarins, lignin, suberin and wall-bound phenolics (PubMed:10417722). Follows a two-step reaction mechanism, wherein the carboxylate substrate first undergoes adenylation by ATP, followed by a thioesterification in the presence of CoA to yield the final CoA thioesters (By similarity).</text>
</comment>
<comment type="catalytic activity">
    <reaction evidence="3">
        <text>(E)-4-coumarate + ATP + CoA = (E)-4-coumaroyl-CoA + AMP + diphosphate</text>
        <dbReference type="Rhea" id="RHEA:19641"/>
        <dbReference type="ChEBI" id="CHEBI:12876"/>
        <dbReference type="ChEBI" id="CHEBI:30616"/>
        <dbReference type="ChEBI" id="CHEBI:33019"/>
        <dbReference type="ChEBI" id="CHEBI:57287"/>
        <dbReference type="ChEBI" id="CHEBI:85008"/>
        <dbReference type="ChEBI" id="CHEBI:456215"/>
        <dbReference type="EC" id="6.2.1.12"/>
    </reaction>
    <physiologicalReaction direction="left-to-right" evidence="3">
        <dbReference type="Rhea" id="RHEA:19642"/>
    </physiologicalReaction>
</comment>
<comment type="catalytic activity">
    <reaction evidence="3">
        <text>(E)-caffeate + ATP + CoA = (E)-caffeoyl-CoA + AMP + diphosphate</text>
        <dbReference type="Rhea" id="RHEA:36299"/>
        <dbReference type="ChEBI" id="CHEBI:30616"/>
        <dbReference type="ChEBI" id="CHEBI:33019"/>
        <dbReference type="ChEBI" id="CHEBI:57287"/>
        <dbReference type="ChEBI" id="CHEBI:57770"/>
        <dbReference type="ChEBI" id="CHEBI:87136"/>
        <dbReference type="ChEBI" id="CHEBI:456215"/>
    </reaction>
    <physiologicalReaction direction="left-to-right" evidence="3">
        <dbReference type="Rhea" id="RHEA:36300"/>
    </physiologicalReaction>
</comment>
<comment type="catalytic activity">
    <reaction evidence="3">
        <text>(E)-ferulate + ATP + CoA = (E)-feruloyl-CoA + AMP + diphosphate</text>
        <dbReference type="Rhea" id="RHEA:36251"/>
        <dbReference type="ChEBI" id="CHEBI:29749"/>
        <dbReference type="ChEBI" id="CHEBI:30616"/>
        <dbReference type="ChEBI" id="CHEBI:33019"/>
        <dbReference type="ChEBI" id="CHEBI:57287"/>
        <dbReference type="ChEBI" id="CHEBI:87305"/>
        <dbReference type="ChEBI" id="CHEBI:456215"/>
        <dbReference type="EC" id="6.2.1.34"/>
    </reaction>
    <physiologicalReaction direction="left-to-right" evidence="3">
        <dbReference type="Rhea" id="RHEA:36252"/>
    </physiologicalReaction>
</comment>
<comment type="catalytic activity">
    <reaction evidence="6">
        <text>(E)-4-coumarate + ATP + H(+) = (E)-4-coumaroyl-AMP + diphosphate</text>
        <dbReference type="Rhea" id="RHEA:72419"/>
        <dbReference type="ChEBI" id="CHEBI:12876"/>
        <dbReference type="ChEBI" id="CHEBI:15378"/>
        <dbReference type="ChEBI" id="CHEBI:30616"/>
        <dbReference type="ChEBI" id="CHEBI:33019"/>
        <dbReference type="ChEBI" id="CHEBI:192348"/>
    </reaction>
    <physiologicalReaction direction="left-to-right" evidence="6">
        <dbReference type="Rhea" id="RHEA:72420"/>
    </physiologicalReaction>
</comment>
<comment type="catalytic activity">
    <reaction evidence="6">
        <text>(E)-4-coumaroyl-AMP + CoA = (E)-4-coumaroyl-CoA + AMP + H(+)</text>
        <dbReference type="Rhea" id="RHEA:72423"/>
        <dbReference type="ChEBI" id="CHEBI:15378"/>
        <dbReference type="ChEBI" id="CHEBI:57287"/>
        <dbReference type="ChEBI" id="CHEBI:85008"/>
        <dbReference type="ChEBI" id="CHEBI:192348"/>
        <dbReference type="ChEBI" id="CHEBI:456215"/>
    </reaction>
    <physiologicalReaction direction="left-to-right" evidence="6">
        <dbReference type="Rhea" id="RHEA:72424"/>
    </physiologicalReaction>
</comment>
<comment type="catalytic activity">
    <reaction evidence="6">
        <text>(E)-caffeate + ATP + H(+) = (E)-caffeoyl-AMP + diphosphate</text>
        <dbReference type="Rhea" id="RHEA:72431"/>
        <dbReference type="ChEBI" id="CHEBI:15378"/>
        <dbReference type="ChEBI" id="CHEBI:30616"/>
        <dbReference type="ChEBI" id="CHEBI:33019"/>
        <dbReference type="ChEBI" id="CHEBI:57770"/>
        <dbReference type="ChEBI" id="CHEBI:192349"/>
    </reaction>
    <physiologicalReaction direction="left-to-right" evidence="6">
        <dbReference type="Rhea" id="RHEA:72432"/>
    </physiologicalReaction>
</comment>
<comment type="catalytic activity">
    <reaction evidence="6">
        <text>(E)-caffeoyl-AMP + CoA = (E)-caffeoyl-CoA + AMP + H(+)</text>
        <dbReference type="Rhea" id="RHEA:72435"/>
        <dbReference type="ChEBI" id="CHEBI:15378"/>
        <dbReference type="ChEBI" id="CHEBI:57287"/>
        <dbReference type="ChEBI" id="CHEBI:87136"/>
        <dbReference type="ChEBI" id="CHEBI:192349"/>
        <dbReference type="ChEBI" id="CHEBI:456215"/>
    </reaction>
    <physiologicalReaction direction="left-to-right" evidence="6">
        <dbReference type="Rhea" id="RHEA:72436"/>
    </physiologicalReaction>
</comment>
<comment type="catalytic activity">
    <reaction evidence="6">
        <text>(E)-ferulate + ATP + H(+) = (E)-feruloyl-AMP + diphosphate</text>
        <dbReference type="Rhea" id="RHEA:72439"/>
        <dbReference type="ChEBI" id="CHEBI:15378"/>
        <dbReference type="ChEBI" id="CHEBI:29749"/>
        <dbReference type="ChEBI" id="CHEBI:30616"/>
        <dbReference type="ChEBI" id="CHEBI:33019"/>
        <dbReference type="ChEBI" id="CHEBI:192350"/>
    </reaction>
    <physiologicalReaction direction="left-to-right" evidence="6">
        <dbReference type="Rhea" id="RHEA:72440"/>
    </physiologicalReaction>
</comment>
<comment type="catalytic activity">
    <reaction evidence="6">
        <text>(E)-feruloyl-AMP + CoA = (E)-feruloyl-CoA + AMP + H(+)</text>
        <dbReference type="Rhea" id="RHEA:72443"/>
        <dbReference type="ChEBI" id="CHEBI:15378"/>
        <dbReference type="ChEBI" id="CHEBI:57287"/>
        <dbReference type="ChEBI" id="CHEBI:87305"/>
        <dbReference type="ChEBI" id="CHEBI:192350"/>
        <dbReference type="ChEBI" id="CHEBI:456215"/>
    </reaction>
    <physiologicalReaction direction="left-to-right" evidence="6">
        <dbReference type="Rhea" id="RHEA:72444"/>
    </physiologicalReaction>
</comment>
<comment type="cofactor">
    <cofactor evidence="1">
        <name>Mg(2+)</name>
        <dbReference type="ChEBI" id="CHEBI:18420"/>
    </cofactor>
</comment>
<comment type="biophysicochemical properties">
    <kinetics>
        <KM evidence="3">2070 uM for cinnamate</KM>
        <KM evidence="3">23 uM for 4-coumarate</KM>
        <KM evidence="3">374 uM for caffeate</KM>
        <KM evidence="3">166 uM for ferulate</KM>
    </kinetics>
</comment>
<comment type="pathway">
    <text evidence="3">Phytoalexin biosynthesis; 3,4',5-trihydroxystilbene biosynthesis; 3,4',5-trihydroxystilbene from trans-4-coumarate: step 1/2.</text>
</comment>
<comment type="alternative products">
    <event type="alternative splicing"/>
    <isoform>
        <id>Q9S777-1</id>
        <name>1</name>
        <sequence type="displayed"/>
    </isoform>
    <text>A number of isoforms are produced. According to EST sequences.</text>
</comment>
<comment type="tissue specificity">
    <text evidence="3">Preferentially expressed in leaves, flowers and siliques.</text>
</comment>
<comment type="induction">
    <text evidence="3">By UV irradiation.</text>
</comment>
<comment type="domain">
    <text evidence="2">Both substrate-binding domains (SBD1 and SBD2) are involved in the substrate recognition, and are sufficient to confer the substrate specificity.</text>
</comment>
<comment type="similarity">
    <text evidence="5">Belongs to the ATP-dependent AMP-binding enzyme family.</text>
</comment>
<comment type="sequence caution" evidence="5">
    <conflict type="erroneous initiation">
        <sequence resource="EMBL-CDS" id="AAL24191"/>
    </conflict>
    <text>Truncated N-terminus.</text>
</comment>
<proteinExistence type="evidence at protein level"/>
<protein>
    <recommendedName>
        <fullName evidence="4">4-coumarate--CoA ligase 3</fullName>
        <shortName evidence="4">4CL 3</shortName>
        <ecNumber evidence="3">6.2.1.12</ecNumber>
    </recommendedName>
    <alternativeName>
        <fullName evidence="5">(E)-ferulate--CoA ligase</fullName>
        <ecNumber evidence="3">6.2.1.34</ecNumber>
    </alternativeName>
    <alternativeName>
        <fullName evidence="4">4-coumarate--CoA ligase isoform 3</fullName>
        <shortName evidence="4">At4CL3</shortName>
    </alternativeName>
    <alternativeName>
        <fullName evidence="4">4-coumaroyl-CoA synthase 3</fullName>
    </alternativeName>
</protein>